<name>NUOCD_SHIBS</name>
<keyword id="KW-0997">Cell inner membrane</keyword>
<keyword id="KW-1003">Cell membrane</keyword>
<keyword id="KW-0472">Membrane</keyword>
<keyword id="KW-0511">Multifunctional enzyme</keyword>
<keyword id="KW-0520">NAD</keyword>
<keyword id="KW-0874">Quinone</keyword>
<keyword id="KW-1278">Translocase</keyword>
<keyword id="KW-0813">Transport</keyword>
<keyword id="KW-0830">Ubiquinone</keyword>
<feature type="chain" id="PRO_0000358696" description="NADH-quinone oxidoreductase subunit C/D">
    <location>
        <begin position="1"/>
        <end position="600"/>
    </location>
</feature>
<feature type="region of interest" description="NADH dehydrogenase I subunit C" evidence="1">
    <location>
        <begin position="1"/>
        <end position="190"/>
    </location>
</feature>
<feature type="region of interest" description="NADH dehydrogenase I subunit D" evidence="1">
    <location>
        <begin position="214"/>
        <end position="600"/>
    </location>
</feature>
<organism>
    <name type="scientific">Shigella boydii serotype 4 (strain Sb227)</name>
    <dbReference type="NCBI Taxonomy" id="300268"/>
    <lineage>
        <taxon>Bacteria</taxon>
        <taxon>Pseudomonadati</taxon>
        <taxon>Pseudomonadota</taxon>
        <taxon>Gammaproteobacteria</taxon>
        <taxon>Enterobacterales</taxon>
        <taxon>Enterobacteriaceae</taxon>
        <taxon>Shigella</taxon>
    </lineage>
</organism>
<evidence type="ECO:0000255" key="1">
    <source>
        <dbReference type="HAMAP-Rule" id="MF_01359"/>
    </source>
</evidence>
<gene>
    <name evidence="1" type="primary">nuoC</name>
    <name evidence="1" type="synonym">nuoCD</name>
    <name evidence="1" type="synonym">nuoD</name>
    <name type="ordered locus">SBO_2319</name>
</gene>
<reference key="1">
    <citation type="journal article" date="2005" name="Nucleic Acids Res.">
        <title>Genome dynamics and diversity of Shigella species, the etiologic agents of bacillary dysentery.</title>
        <authorList>
            <person name="Yang F."/>
            <person name="Yang J."/>
            <person name="Zhang X."/>
            <person name="Chen L."/>
            <person name="Jiang Y."/>
            <person name="Yan Y."/>
            <person name="Tang X."/>
            <person name="Wang J."/>
            <person name="Xiong Z."/>
            <person name="Dong J."/>
            <person name="Xue Y."/>
            <person name="Zhu Y."/>
            <person name="Xu X."/>
            <person name="Sun L."/>
            <person name="Chen S."/>
            <person name="Nie H."/>
            <person name="Peng J."/>
            <person name="Xu J."/>
            <person name="Wang Y."/>
            <person name="Yuan Z."/>
            <person name="Wen Y."/>
            <person name="Yao Z."/>
            <person name="Shen Y."/>
            <person name="Qiang B."/>
            <person name="Hou Y."/>
            <person name="Yu J."/>
            <person name="Jin Q."/>
        </authorList>
    </citation>
    <scope>NUCLEOTIDE SEQUENCE [LARGE SCALE GENOMIC DNA]</scope>
    <source>
        <strain>Sb227</strain>
    </source>
</reference>
<comment type="function">
    <text evidence="1">NDH-1 shuttles electrons from NADH, via FMN and iron-sulfur (Fe-S) centers, to quinones in the respiratory chain. The immediate electron acceptor for the enzyme in this species is believed to be ubiquinone. Couples the redox reaction to proton translocation (for every two electrons transferred, four hydrogen ions are translocated across the cytoplasmic membrane), and thus conserves the redox energy in a proton gradient.</text>
</comment>
<comment type="catalytic activity">
    <reaction evidence="1">
        <text>a quinone + NADH + 5 H(+)(in) = a quinol + NAD(+) + 4 H(+)(out)</text>
        <dbReference type="Rhea" id="RHEA:57888"/>
        <dbReference type="ChEBI" id="CHEBI:15378"/>
        <dbReference type="ChEBI" id="CHEBI:24646"/>
        <dbReference type="ChEBI" id="CHEBI:57540"/>
        <dbReference type="ChEBI" id="CHEBI:57945"/>
        <dbReference type="ChEBI" id="CHEBI:132124"/>
    </reaction>
</comment>
<comment type="subunit">
    <text evidence="1">NDH-1 is composed of 13 different subunits. Subunits NuoB, CD, E, F, and G constitute the peripheral sector of the complex.</text>
</comment>
<comment type="subcellular location">
    <subcellularLocation>
        <location evidence="1">Cell inner membrane</location>
        <topology evidence="1">Peripheral membrane protein</topology>
        <orientation evidence="1">Cytoplasmic side</orientation>
    </subcellularLocation>
</comment>
<comment type="similarity">
    <text evidence="1">In the N-terminal section; belongs to the complex I 30 kDa subunit family.</text>
</comment>
<comment type="similarity">
    <text evidence="1">In the C-terminal section; belongs to the complex I 49 kDa subunit family.</text>
</comment>
<proteinExistence type="inferred from homology"/>
<dbReference type="EC" id="7.1.1.-" evidence="1"/>
<dbReference type="EMBL" id="CP000036">
    <property type="protein sequence ID" value="ABB66883.1"/>
    <property type="molecule type" value="Genomic_DNA"/>
</dbReference>
<dbReference type="RefSeq" id="WP_000247878.1">
    <property type="nucleotide sequence ID" value="NC_007613.1"/>
</dbReference>
<dbReference type="SMR" id="Q31YH5"/>
<dbReference type="GeneID" id="93774888"/>
<dbReference type="KEGG" id="sbo:SBO_2319"/>
<dbReference type="HOGENOM" id="CLU_015134_3_2_6"/>
<dbReference type="Proteomes" id="UP000007067">
    <property type="component" value="Chromosome"/>
</dbReference>
<dbReference type="GO" id="GO:0030964">
    <property type="term" value="C:NADH dehydrogenase complex"/>
    <property type="evidence" value="ECO:0007669"/>
    <property type="project" value="InterPro"/>
</dbReference>
<dbReference type="GO" id="GO:0005886">
    <property type="term" value="C:plasma membrane"/>
    <property type="evidence" value="ECO:0007669"/>
    <property type="project" value="UniProtKB-SubCell"/>
</dbReference>
<dbReference type="GO" id="GO:0051287">
    <property type="term" value="F:NAD binding"/>
    <property type="evidence" value="ECO:0007669"/>
    <property type="project" value="InterPro"/>
</dbReference>
<dbReference type="GO" id="GO:0008137">
    <property type="term" value="F:NADH dehydrogenase (ubiquinone) activity"/>
    <property type="evidence" value="ECO:0007669"/>
    <property type="project" value="InterPro"/>
</dbReference>
<dbReference type="GO" id="GO:0050136">
    <property type="term" value="F:NADH:ubiquinone reductase (non-electrogenic) activity"/>
    <property type="evidence" value="ECO:0007669"/>
    <property type="project" value="UniProtKB-UniRule"/>
</dbReference>
<dbReference type="GO" id="GO:0048038">
    <property type="term" value="F:quinone binding"/>
    <property type="evidence" value="ECO:0007669"/>
    <property type="project" value="UniProtKB-KW"/>
</dbReference>
<dbReference type="FunFam" id="1.10.645.10:FF:000001">
    <property type="entry name" value="NADH-quinone oxidoreductase subunit C/D"/>
    <property type="match status" value="1"/>
</dbReference>
<dbReference type="FunFam" id="3.30.460.80:FF:000001">
    <property type="entry name" value="NADH-quinone oxidoreductase subunit C/D"/>
    <property type="match status" value="1"/>
</dbReference>
<dbReference type="Gene3D" id="1.10.645.10">
    <property type="entry name" value="Cytochrome-c3 Hydrogenase, chain B"/>
    <property type="match status" value="1"/>
</dbReference>
<dbReference type="Gene3D" id="3.30.460.80">
    <property type="entry name" value="NADH:ubiquinone oxidoreductase, 30kDa subunit"/>
    <property type="match status" value="1"/>
</dbReference>
<dbReference type="HAMAP" id="MF_01357">
    <property type="entry name" value="NDH1_NuoC"/>
    <property type="match status" value="1"/>
</dbReference>
<dbReference type="HAMAP" id="MF_01359">
    <property type="entry name" value="NDH1_NuoCD_1"/>
    <property type="match status" value="1"/>
</dbReference>
<dbReference type="HAMAP" id="MF_01358">
    <property type="entry name" value="NDH1_NuoD"/>
    <property type="match status" value="1"/>
</dbReference>
<dbReference type="InterPro" id="IPR010218">
    <property type="entry name" value="NADH_DH_suC"/>
</dbReference>
<dbReference type="InterPro" id="IPR023062">
    <property type="entry name" value="NADH_DH_suCD"/>
</dbReference>
<dbReference type="InterPro" id="IPR001135">
    <property type="entry name" value="NADH_Q_OxRdtase_suD"/>
</dbReference>
<dbReference type="InterPro" id="IPR037232">
    <property type="entry name" value="NADH_quin_OxRdtase_su_C/D-like"/>
</dbReference>
<dbReference type="InterPro" id="IPR001268">
    <property type="entry name" value="NADH_UbQ_OxRdtase_30kDa_su"/>
</dbReference>
<dbReference type="InterPro" id="IPR014029">
    <property type="entry name" value="NADH_UbQ_OxRdtase_49kDa_CS"/>
</dbReference>
<dbReference type="InterPro" id="IPR020396">
    <property type="entry name" value="NADH_UbQ_OxRdtase_CS"/>
</dbReference>
<dbReference type="InterPro" id="IPR022885">
    <property type="entry name" value="NDH1_su_D/H"/>
</dbReference>
<dbReference type="InterPro" id="IPR029014">
    <property type="entry name" value="NiFe-Hase_large"/>
</dbReference>
<dbReference type="NCBIfam" id="TIGR01961">
    <property type="entry name" value="NuoC_fam"/>
    <property type="match status" value="1"/>
</dbReference>
<dbReference type="NCBIfam" id="TIGR01962">
    <property type="entry name" value="NuoD"/>
    <property type="match status" value="1"/>
</dbReference>
<dbReference type="NCBIfam" id="NF004739">
    <property type="entry name" value="PRK06075.1"/>
    <property type="match status" value="1"/>
</dbReference>
<dbReference type="NCBIfam" id="NF008728">
    <property type="entry name" value="PRK11742.1"/>
    <property type="match status" value="1"/>
</dbReference>
<dbReference type="PANTHER" id="PTHR11993:SF45">
    <property type="entry name" value="NADH-QUINONE OXIDOREDUCTASE SUBUNIT C_D"/>
    <property type="match status" value="1"/>
</dbReference>
<dbReference type="PANTHER" id="PTHR11993">
    <property type="entry name" value="NADH-UBIQUINONE OXIDOREDUCTASE 49 KDA SUBUNIT"/>
    <property type="match status" value="1"/>
</dbReference>
<dbReference type="Pfam" id="PF00329">
    <property type="entry name" value="Complex1_30kDa"/>
    <property type="match status" value="1"/>
</dbReference>
<dbReference type="Pfam" id="PF00346">
    <property type="entry name" value="Complex1_49kDa"/>
    <property type="match status" value="1"/>
</dbReference>
<dbReference type="SUPFAM" id="SSF56762">
    <property type="entry name" value="HydB/Nqo4-like"/>
    <property type="match status" value="1"/>
</dbReference>
<dbReference type="SUPFAM" id="SSF143243">
    <property type="entry name" value="Nqo5-like"/>
    <property type="match status" value="1"/>
</dbReference>
<dbReference type="PROSITE" id="PS00542">
    <property type="entry name" value="COMPLEX1_30K"/>
    <property type="match status" value="1"/>
</dbReference>
<dbReference type="PROSITE" id="PS00535">
    <property type="entry name" value="COMPLEX1_49K"/>
    <property type="match status" value="1"/>
</dbReference>
<accession>Q31YH5</accession>
<sequence length="600" mass="68725">MVNNMTDLTAQEPAWQTRDHLDDPVIGELRNRFGPDAFTVQATRTGVPVVWIKREQLLEVGDFLKKLPKPYVMLFDLHGMDERLRTHREGLPAADFSVFYHLISIDRNRDIMLKVALAENDLHVPTFTKLFPNANWYERETWDLFGITFDGHPNLRRIMMPQTWKGHPLRKDYPARATEFSPFELTKAKQDLEMEALTFKPEEWGMKRGTENEDFMFLNLGPNHPSAHGAFRIVLQLDGEEIVDCVPDIGYHHRGAEKMGERQSWHSYIPYTDRIEYLGGCVNEMPYVLAVEKLAGITVPDRVNVIRVMLSELFRINSHLLYISTFIQDVGAMTPVFFAFTDRQKIYDLVEAITGFRMHPAWFRIGGVAHDLPRGWDRLLREFLDWMPKRLASYEKAALQNTILKGRSQGVAAYGAKEALEWGTTGAGLRATGIDFDVRKARPYSGYENFDFEIPVGGGVSDCYTRVMLKVEELRQSLRILEQCLNNMPEGPFKADHPLTTPPPKERTLQHIETLITHFLQVSWGPVMPANESFQMIEATKGINSYYLTSDGSTMSYRTRIRTPSYAHLQQIPAAIRGSLVSDLIVYLGSIDFVMSDVDR</sequence>
<protein>
    <recommendedName>
        <fullName evidence="1">NADH-quinone oxidoreductase subunit C/D</fullName>
        <ecNumber evidence="1">7.1.1.-</ecNumber>
    </recommendedName>
    <alternativeName>
        <fullName evidence="1">NADH dehydrogenase I subunit C/D</fullName>
    </alternativeName>
    <alternativeName>
        <fullName evidence="1">NDH-1 subunit C/D</fullName>
    </alternativeName>
</protein>